<accession>Q51372</accession>
<accession>Q9HY68</accession>
<dbReference type="EC" id="2.3.1.-"/>
<dbReference type="EMBL" id="U27829">
    <property type="protein sequence ID" value="AAA91126.1"/>
    <property type="molecule type" value="Genomic_DNA"/>
</dbReference>
<dbReference type="EMBL" id="AE004091">
    <property type="protein sequence ID" value="AAG06934.1"/>
    <property type="molecule type" value="Genomic_DNA"/>
</dbReference>
<dbReference type="PIR" id="G83202">
    <property type="entry name" value="G83202"/>
</dbReference>
<dbReference type="RefSeq" id="NP_252236.1">
    <property type="nucleotide sequence ID" value="NC_002516.2"/>
</dbReference>
<dbReference type="RefSeq" id="WP_003112885.1">
    <property type="nucleotide sequence ID" value="NZ_QZGE01000001.1"/>
</dbReference>
<dbReference type="PDB" id="4KNC">
    <property type="method" value="X-ray"/>
    <property type="resolution" value="2.14 A"/>
    <property type="chains" value="A/B=27-474"/>
</dbReference>
<dbReference type="PDBsum" id="4KNC"/>
<dbReference type="SMR" id="Q51372"/>
<dbReference type="IntAct" id="Q51372">
    <property type="interactions" value="1"/>
</dbReference>
<dbReference type="STRING" id="208964.PA3546"/>
<dbReference type="PaxDb" id="208964-PA3546"/>
<dbReference type="GeneID" id="878551"/>
<dbReference type="KEGG" id="pae:PA3546"/>
<dbReference type="PATRIC" id="fig|208964.12.peg.3710"/>
<dbReference type="PseudoCAP" id="PA3546"/>
<dbReference type="HOGENOM" id="CLU_651753_0_0_6"/>
<dbReference type="InParanoid" id="Q51372"/>
<dbReference type="OrthoDB" id="6773032at2"/>
<dbReference type="PhylomeDB" id="Q51372"/>
<dbReference type="BioCyc" id="PAER208964:G1FZ6-3614-MONOMER"/>
<dbReference type="UniPathway" id="UPA00286"/>
<dbReference type="EvolutionaryTrace" id="Q51372"/>
<dbReference type="Proteomes" id="UP000002438">
    <property type="component" value="Chromosome"/>
</dbReference>
<dbReference type="GO" id="GO:0042597">
    <property type="term" value="C:periplasmic space"/>
    <property type="evidence" value="ECO:0000314"/>
    <property type="project" value="PseudoCAP"/>
</dbReference>
<dbReference type="GO" id="GO:0016746">
    <property type="term" value="F:acyltransferase activity"/>
    <property type="evidence" value="ECO:0007669"/>
    <property type="project" value="UniProtKB-KW"/>
</dbReference>
<dbReference type="GO" id="GO:0042121">
    <property type="term" value="P:alginic acid biosynthetic process"/>
    <property type="evidence" value="ECO:0000314"/>
    <property type="project" value="PseudoCAP"/>
</dbReference>
<dbReference type="GO" id="GO:0044010">
    <property type="term" value="P:single-species biofilm formation"/>
    <property type="evidence" value="ECO:0000314"/>
    <property type="project" value="PseudoCAP"/>
</dbReference>
<dbReference type="CDD" id="cd14487">
    <property type="entry name" value="AlgX_C"/>
    <property type="match status" value="1"/>
</dbReference>
<dbReference type="CDD" id="cd14441">
    <property type="entry name" value="AlgX_N"/>
    <property type="match status" value="1"/>
</dbReference>
<dbReference type="Gene3D" id="2.60.120.1380">
    <property type="entry name" value="C-terminal carbohydrate-binding module"/>
    <property type="match status" value="1"/>
</dbReference>
<dbReference type="InterPro" id="IPR031811">
    <property type="entry name" value="ALGX/ALGJ_SGNH-like"/>
</dbReference>
<dbReference type="InterPro" id="IPR031798">
    <property type="entry name" value="AlgX_C"/>
</dbReference>
<dbReference type="InterPro" id="IPR038639">
    <property type="entry name" value="AlgX_C_sf"/>
</dbReference>
<dbReference type="InterPro" id="IPR034655">
    <property type="entry name" value="AlgX_N"/>
</dbReference>
<dbReference type="Pfam" id="PF16822">
    <property type="entry name" value="ALGX"/>
    <property type="match status" value="1"/>
</dbReference>
<dbReference type="Pfam" id="PF16824">
    <property type="entry name" value="CBM_26"/>
    <property type="match status" value="1"/>
</dbReference>
<organism>
    <name type="scientific">Pseudomonas aeruginosa (strain ATCC 15692 / DSM 22644 / CIP 104116 / JCM 14847 / LMG 12228 / 1C / PRS 101 / PAO1)</name>
    <dbReference type="NCBI Taxonomy" id="208964"/>
    <lineage>
        <taxon>Bacteria</taxon>
        <taxon>Pseudomonadati</taxon>
        <taxon>Pseudomonadota</taxon>
        <taxon>Gammaproteobacteria</taxon>
        <taxon>Pseudomonadales</taxon>
        <taxon>Pseudomonadaceae</taxon>
        <taxon>Pseudomonas</taxon>
    </lineage>
</organism>
<sequence>MKTRTSRLFRLSALAAGLCLAQAALAADPGAAPSYQALPAGNLCPAAAYDSRYNTKYLGFFTHLVQAQDDWLFRTTYDLRTDFGTSAEGWRELRALRDELKRKGIELVVVYQPTRGLVNREKLSPAEKAGFDYELAKKNYLATIARFRQAGIWTPDFSPLFDEKEEHAYYFKGDHHWTPHGARRSAKIVAETLKQVPGFEEIPKKQFESKRVGLLSKLGTFHKAAAQLCGNSYATQYVDRFETEPVGASDSGDLFGDGGNPQIALVGTSNSGPAYNFAGFLEEFSGADILNNAVSGGGFDSSLLAYMTSEEFHKNPPKILIWEFATHYDMAQKSFYRQAMPLVDNGCSGRKTVLSRKVKLRQGRNEVLLNSAALPIRSGSYVADVTYSDPSVHELKNTIWYMNGRREQLKIEQSKAVDTGGRYVFQLRNDSDWADQQFLSLEIEAPEDMPQGLEVQASICQAAPAKASQSVAGR</sequence>
<reference key="1">
    <citation type="journal article" date="1996" name="J. Bacteriol.">
        <title>Alginate synthesis in Pseudomonas aeruginosa: the role of AlgL (alginate lyase) and AlgX.</title>
        <authorList>
            <person name="Monday S.R."/>
            <person name="Schiller N.L."/>
        </authorList>
    </citation>
    <scope>NUCLEOTIDE SEQUENCE [GENOMIC DNA]</scope>
    <source>
        <strain>FRD1</strain>
    </source>
</reference>
<reference key="2">
    <citation type="journal article" date="2000" name="Nature">
        <title>Complete genome sequence of Pseudomonas aeruginosa PAO1, an opportunistic pathogen.</title>
        <authorList>
            <person name="Stover C.K."/>
            <person name="Pham X.-Q.T."/>
            <person name="Erwin A.L."/>
            <person name="Mizoguchi S.D."/>
            <person name="Warrener P."/>
            <person name="Hickey M.J."/>
            <person name="Brinkman F.S.L."/>
            <person name="Hufnagle W.O."/>
            <person name="Kowalik D.J."/>
            <person name="Lagrou M."/>
            <person name="Garber R.L."/>
            <person name="Goltry L."/>
            <person name="Tolentino E."/>
            <person name="Westbrock-Wadman S."/>
            <person name="Yuan Y."/>
            <person name="Brody L.L."/>
            <person name="Coulter S.N."/>
            <person name="Folger K.R."/>
            <person name="Kas A."/>
            <person name="Larbig K."/>
            <person name="Lim R.M."/>
            <person name="Smith K.A."/>
            <person name="Spencer D.H."/>
            <person name="Wong G.K.-S."/>
            <person name="Wu Z."/>
            <person name="Paulsen I.T."/>
            <person name="Reizer J."/>
            <person name="Saier M.H. Jr."/>
            <person name="Hancock R.E.W."/>
            <person name="Lory S."/>
            <person name="Olson M.V."/>
        </authorList>
    </citation>
    <scope>NUCLEOTIDE SEQUENCE [LARGE SCALE GENOMIC DNA]</scope>
    <source>
        <strain>ATCC 15692 / DSM 22644 / CIP 104116 / JCM 14847 / LMG 12228 / 1C / PRS 101 / PAO1</strain>
    </source>
</reference>
<reference key="3">
    <citation type="journal article" date="2004" name="J. Bacteriol.">
        <title>AlgX is a periplasmic protein required for alginate biosynthesis in Pseudomonas aeruginosa.</title>
        <authorList>
            <person name="Robles-Price A."/>
            <person name="Wong T.Y."/>
            <person name="Sletta H."/>
            <person name="Valla S."/>
            <person name="Schiller N.L."/>
        </authorList>
    </citation>
    <scope>PROTEIN SEQUENCE OF 27-32</scope>
    <scope>FUNCTION</scope>
    <scope>SUBCELLULAR LOCATION</scope>
    <scope>DISRUPTION PHENOTYPE</scope>
    <source>
        <strain>FRD1</strain>
    </source>
</reference>
<reference key="4">
    <citation type="journal article" date="2006" name="Biochimie">
        <title>Biochemical analysis of alginate biosynthesis protein AlgX from Pseudomonas aeruginosa: purification of an AlgX-MucD (AlgY) protein complex.</title>
        <authorList>
            <person name="Gutsche J."/>
            <person name="Remminghorst U."/>
            <person name="Rehm B.H."/>
        </authorList>
    </citation>
    <scope>INTERACTION WITH MUCD</scope>
    <scope>DISRUPTION PHENOTYPE</scope>
    <scope>SUBCELLULAR LOCATION</scope>
    <scope>IDENTIFICATION BY MASS SPECTROMETRY</scope>
    <source>
        <strain>FRD1</strain>
    </source>
</reference>
<reference key="5">
    <citation type="journal article" date="2010" name="Acta Crystallogr. F">
        <title>Expression, purification, crystallization and preliminary X-ray analysis of Pseudomonas aeruginosa AlgX.</title>
        <authorList>
            <person name="Weadge J.T."/>
            <person name="Yip P.P."/>
            <person name="Robinson H."/>
            <person name="Arnett K."/>
            <person name="Tipton P.A."/>
            <person name="Howell P.L."/>
        </authorList>
    </citation>
    <scope>CRYSTALLIZATION</scope>
    <scope>IDENTIFICATION BY MASS SPECTROMETRY</scope>
    <source>
        <strain>ATCC 15692 / DSM 22644 / CIP 104116 / JCM 14847 / LMG 12228 / 1C / PRS 101 / PAO1</strain>
    </source>
</reference>
<reference key="6">
    <citation type="journal article" date="2012" name="Appl. Microbiol. Biotechnol.">
        <title>Identification of a periplasmic AlgK-AlgX-MucD multiprotein complex in Pseudomonas aeruginosa involved in biosynthesis and regulation of alginate.</title>
        <authorList>
            <person name="Hay I.D."/>
            <person name="Schmidt O."/>
            <person name="Filitcheva J."/>
            <person name="Rehm B.H."/>
        </authorList>
    </citation>
    <scope>INTERACTION WITH ALGK AND MUCD</scope>
    <scope>DISRUPTION PHENOTYPE</scope>
    <source>
        <strain>ATCC 15692 / DSM 22644 / CIP 104116 / JCM 14847 / LMG 12228 / 1C / PRS 101 / PAO1</strain>
    </source>
</reference>
<reference key="7">
    <citation type="journal article" date="2013" name="J. Biol. Chem.">
        <title>Structural and functional characterization of Pseudomonas aeruginosa AlgX: role of AlgX in alginate acetylation.</title>
        <authorList>
            <person name="Riley L.M."/>
            <person name="Weadge J.T."/>
            <person name="Baker P."/>
            <person name="Robinson H."/>
            <person name="Codee J.D."/>
            <person name="Tipton P.A."/>
            <person name="Ohman D.E."/>
            <person name="Howell P.L."/>
        </authorList>
    </citation>
    <scope>X-RAY CRYSTALLOGRAPHY (2.14 ANGSTROMS) OF 27-474</scope>
    <scope>FUNCTION</scope>
    <scope>DOMAIN</scope>
    <scope>DISULFIDE BONDS</scope>
    <scope>ACTIVE SITES</scope>
    <scope>REACTION MECHANISM</scope>
    <scope>SUBUNIT</scope>
    <scope>MUTAGENESIS OF ASP-174; HIS-176; SER-269; TYR-275 AND TYR-328</scope>
    <source>
        <strain>ATCC 15692 / DSM 22644 / CIP 104116 / JCM 14847 / LMG 12228 / 1C / PRS 101 / PAO1</strain>
    </source>
</reference>
<feature type="signal peptide" evidence="1">
    <location>
        <begin position="1"/>
        <end position="26"/>
    </location>
</feature>
<feature type="chain" id="PRO_0000020671" description="Alginate biosynthesis protein AlgX">
    <location>
        <begin position="27"/>
        <end position="474"/>
    </location>
</feature>
<feature type="region of interest" description="SGNH hydrolase-like domain">
    <location>
        <begin position="27"/>
        <end position="347"/>
    </location>
</feature>
<feature type="region of interest" description="CBM domain">
    <location>
        <begin position="348"/>
        <end position="474"/>
    </location>
</feature>
<feature type="active site" evidence="6">
    <location>
        <position position="174"/>
    </location>
</feature>
<feature type="active site" description="Proton acceptor" evidence="6">
    <location>
        <position position="176"/>
    </location>
</feature>
<feature type="active site" description="Nucleophile" evidence="6">
    <location>
        <position position="269"/>
    </location>
</feature>
<feature type="disulfide bond" evidence="4">
    <location>
        <begin position="44"/>
        <end position="229"/>
    </location>
</feature>
<feature type="disulfide bond" evidence="4">
    <location>
        <begin position="347"/>
        <end position="460"/>
    </location>
</feature>
<feature type="mutagenesis site" description="Produces a non-acetylated alginate. Loss of in vitro acetylesterase activity." evidence="4">
    <original>D</original>
    <variation>A</variation>
    <location>
        <position position="174"/>
    </location>
</feature>
<feature type="mutagenesis site" description="Produces a non-acetylated alginate. Loss of in vitro acetylesterase activity." evidence="4">
    <original>H</original>
    <variation>A</variation>
    <location>
        <position position="176"/>
    </location>
</feature>
<feature type="mutagenesis site" description="Produces a non-acetylated alginate. Loss of in vitro acetylesterase activity." evidence="4">
    <original>S</original>
    <variation>A</variation>
    <location>
        <position position="269"/>
    </location>
</feature>
<feature type="mutagenesis site" description="40% reduction in alginate acetylation." evidence="4">
    <original>Y</original>
    <variation>A</variation>
    <location>
        <position position="275"/>
    </location>
</feature>
<feature type="mutagenesis site" description="50% reduction in alginate acetylation." evidence="4">
    <original>Y</original>
    <variation>A</variation>
    <location>
        <position position="328"/>
    </location>
</feature>
<feature type="sequence conflict" description="In Ref. 1; AAA91126." evidence="5" ref="1">
    <original>Y</original>
    <variation>D</variation>
    <location>
        <position position="49"/>
    </location>
</feature>
<feature type="helix" evidence="7">
    <location>
        <begin position="45"/>
        <end position="48"/>
    </location>
</feature>
<feature type="helix" evidence="7">
    <location>
        <begin position="50"/>
        <end position="52"/>
    </location>
</feature>
<feature type="helix" evidence="7">
    <location>
        <begin position="58"/>
        <end position="60"/>
    </location>
</feature>
<feature type="strand" evidence="7">
    <location>
        <begin position="63"/>
        <end position="66"/>
    </location>
</feature>
<feature type="strand" evidence="7">
    <location>
        <begin position="72"/>
        <end position="74"/>
    </location>
</feature>
<feature type="turn" evidence="7">
    <location>
        <begin position="75"/>
        <end position="78"/>
    </location>
</feature>
<feature type="helix" evidence="7">
    <location>
        <begin position="87"/>
        <end position="102"/>
    </location>
</feature>
<feature type="strand" evidence="7">
    <location>
        <begin position="106"/>
        <end position="111"/>
    </location>
</feature>
<feature type="helix" evidence="7">
    <location>
        <begin position="115"/>
        <end position="119"/>
    </location>
</feature>
<feature type="helix" evidence="7">
    <location>
        <begin position="120"/>
        <end position="122"/>
    </location>
</feature>
<feature type="helix" evidence="7">
    <location>
        <begin position="125"/>
        <end position="130"/>
    </location>
</feature>
<feature type="helix" evidence="7">
    <location>
        <begin position="133"/>
        <end position="149"/>
    </location>
</feature>
<feature type="helix" evidence="7">
    <location>
        <begin position="158"/>
        <end position="160"/>
    </location>
</feature>
<feature type="strand" evidence="7">
    <location>
        <begin position="174"/>
        <end position="177"/>
    </location>
</feature>
<feature type="helix" evidence="7">
    <location>
        <begin position="179"/>
        <end position="195"/>
    </location>
</feature>
<feature type="helix" evidence="7">
    <location>
        <begin position="199"/>
        <end position="201"/>
    </location>
</feature>
<feature type="strand" evidence="7">
    <location>
        <begin position="206"/>
        <end position="217"/>
    </location>
</feature>
<feature type="helix" evidence="7">
    <location>
        <begin position="220"/>
        <end position="229"/>
    </location>
</feature>
<feature type="strand" evidence="7">
    <location>
        <begin position="236"/>
        <end position="247"/>
    </location>
</feature>
<feature type="helix" evidence="7">
    <location>
        <begin position="253"/>
        <end position="259"/>
    </location>
</feature>
<feature type="strand" evidence="7">
    <location>
        <begin position="263"/>
        <end position="266"/>
    </location>
</feature>
<feature type="helix" evidence="7">
    <location>
        <begin position="269"/>
        <end position="271"/>
    </location>
</feature>
<feature type="helix" evidence="7">
    <location>
        <begin position="273"/>
        <end position="275"/>
    </location>
</feature>
<feature type="helix" evidence="7">
    <location>
        <begin position="277"/>
        <end position="285"/>
    </location>
</feature>
<feature type="strand" evidence="7">
    <location>
        <begin position="289"/>
        <end position="291"/>
    </location>
</feature>
<feature type="turn" evidence="7">
    <location>
        <begin position="298"/>
        <end position="300"/>
    </location>
</feature>
<feature type="helix" evidence="7">
    <location>
        <begin position="301"/>
        <end position="308"/>
    </location>
</feature>
<feature type="helix" evidence="7">
    <location>
        <begin position="310"/>
        <end position="314"/>
    </location>
</feature>
<feature type="strand" evidence="7">
    <location>
        <begin position="318"/>
        <end position="324"/>
    </location>
</feature>
<feature type="helix" evidence="7">
    <location>
        <begin position="333"/>
        <end position="342"/>
    </location>
</feature>
<feature type="turn" evidence="7">
    <location>
        <begin position="343"/>
        <end position="349"/>
    </location>
</feature>
<feature type="strand" evidence="7">
    <location>
        <begin position="352"/>
        <end position="359"/>
    </location>
</feature>
<feature type="strand" evidence="7">
    <location>
        <begin position="362"/>
        <end position="369"/>
    </location>
</feature>
<feature type="helix" evidence="7">
    <location>
        <begin position="378"/>
        <end position="380"/>
    </location>
</feature>
<feature type="strand" evidence="7">
    <location>
        <begin position="381"/>
        <end position="389"/>
    </location>
</feature>
<feature type="strand" evidence="7">
    <location>
        <begin position="394"/>
        <end position="401"/>
    </location>
</feature>
<feature type="strand" evidence="7">
    <location>
        <begin position="406"/>
        <end position="412"/>
    </location>
</feature>
<feature type="strand" evidence="7">
    <location>
        <begin position="422"/>
        <end position="426"/>
    </location>
</feature>
<feature type="turn" evidence="7">
    <location>
        <begin position="431"/>
        <end position="435"/>
    </location>
</feature>
<feature type="strand" evidence="7">
    <location>
        <begin position="437"/>
        <end position="444"/>
    </location>
</feature>
<feature type="strand" evidence="7">
    <location>
        <begin position="454"/>
        <end position="461"/>
    </location>
</feature>
<keyword id="KW-0002">3D-structure</keyword>
<keyword id="KW-0012">Acyltransferase</keyword>
<keyword id="KW-0016">Alginate biosynthesis</keyword>
<keyword id="KW-0903">Direct protein sequencing</keyword>
<keyword id="KW-1015">Disulfide bond</keyword>
<keyword id="KW-0574">Periplasm</keyword>
<keyword id="KW-1185">Reference proteome</keyword>
<keyword id="KW-0732">Signal</keyword>
<keyword id="KW-0808">Transferase</keyword>
<protein>
    <recommendedName>
        <fullName>Alginate biosynthesis protein AlgX</fullName>
    </recommendedName>
    <alternativeName>
        <fullName>Probable alginate O-acetyltransferase AlgX</fullName>
        <ecNumber>2.3.1.-</ecNumber>
    </alternativeName>
</protein>
<name>ALGX_PSEAE</name>
<evidence type="ECO:0000269" key="1">
    <source>
    </source>
</evidence>
<evidence type="ECO:0000269" key="2">
    <source>
    </source>
</evidence>
<evidence type="ECO:0000269" key="3">
    <source>
    </source>
</evidence>
<evidence type="ECO:0000269" key="4">
    <source>
    </source>
</evidence>
<evidence type="ECO:0000305" key="5"/>
<evidence type="ECO:0000305" key="6">
    <source>
    </source>
</evidence>
<evidence type="ECO:0007829" key="7">
    <source>
        <dbReference type="PDB" id="4KNC"/>
    </source>
</evidence>
<gene>
    <name type="primary">algX</name>
    <name type="ordered locus">PA3546</name>
</gene>
<proteinExistence type="evidence at protein level"/>
<comment type="function">
    <text evidence="1 4">Plays two roles in the biosynthesis of the exopolysaccharide alginate: protects alginate from degradation as the polymer traverses the periplasm, and also plays a role in its O-acetylation. Acetylation of alginate causes the cells in the biofilm to adhere better to lung epithelium, form microcolonies, and resist the effects of the host immune system and/or antibiotics. Displays a low acetylesterase activity in vitro using a pseudosubstrate, 3-carboxyumbelliferyl acetate. Probably has acetyltransferase activity in vivo.</text>
</comment>
<comment type="pathway">
    <text>Glycan biosynthesis; alginate biosynthesis.</text>
</comment>
<comment type="subunit">
    <text evidence="2 3 4">Monomer. Interacts with AlgK and MucD.</text>
</comment>
<comment type="subcellular location">
    <subcellularLocation>
        <location evidence="1 2">Periplasm</location>
    </subcellularLocation>
</comment>
<comment type="domain">
    <text evidence="4">Consists of two domains, with an N-terminal domain with structural homology to members of the SGNH (GDSL) hydrolase superfamily and a C-terminal carbohydrate-binding module (CBM) that may bind alginate.</text>
</comment>
<comment type="disruption phenotype">
    <text evidence="1 2 3">Cells lacking this gene in the mucoid strain FRD1 are phenotypically non-mucoid, i.e. non-alginate producing, and secrete dialyzable oligouronic acids of various lengths that are mainly mannuronic acid dimers resulting from alginate lyase (AlgL) degradation of polymannuronic acid. Disruption of algX in the non-mucoid strain PAO1 does not visibly alter the phenotype of the parent.</text>
</comment>
<comment type="similarity">
    <text evidence="5">Belongs to the AlgX family.</text>
</comment>